<name>BCAS_SACES</name>
<comment type="function">
    <text evidence="2">Catalyzes the conversion of (2E,6E)-farnesyl diphosphate (FPP) to yield the bicyclic sesquiterpene (2S,10R)-(-)-(E)-beta-caryophyllene via a probable 1,10-cyclization, which could involve the abstraction of the pyrophosphate from FPP to yield a (E,E)-germacradienyl cation.</text>
</comment>
<comment type="catalytic activity">
    <reaction evidence="2">
        <text>(2E,6E)-farnesyl diphosphate = (-)-(E)-beta-caryophyllene + diphosphate</text>
        <dbReference type="Rhea" id="RHEA:28294"/>
        <dbReference type="ChEBI" id="CHEBI:10357"/>
        <dbReference type="ChEBI" id="CHEBI:33019"/>
        <dbReference type="ChEBI" id="CHEBI:175763"/>
        <dbReference type="EC" id="4.2.3.57"/>
    </reaction>
</comment>
<comment type="cofactor">
    <cofactor evidence="1">
        <name>Mg(2+)</name>
        <dbReference type="ChEBI" id="CHEBI:18420"/>
    </cofactor>
    <text evidence="1">Binds 3 Mg(2+) ions per subunit.</text>
</comment>
<comment type="pathway">
    <text evidence="5">Secondary metabolite biosynthesis; terpenoid biosynthesis.</text>
</comment>
<comment type="domain">
    <text evidence="5">The Asp-Asp-Xaa-Xaa-Asp (DDXXD) motif is important for the catalytic activity, presumably through binding to Mg(2+).</text>
</comment>
<comment type="similarity">
    <text evidence="4">Belongs to the terpene synthase family.</text>
</comment>
<keyword id="KW-0456">Lyase</keyword>
<keyword id="KW-0460">Magnesium</keyword>
<keyword id="KW-0479">Metal-binding</keyword>
<keyword id="KW-1185">Reference proteome</keyword>
<evidence type="ECO:0000250" key="1">
    <source>
        <dbReference type="UniProtKB" id="B5HDJ6"/>
    </source>
</evidence>
<evidence type="ECO:0000269" key="2">
    <source>
    </source>
</evidence>
<evidence type="ECO:0000303" key="3">
    <source>
    </source>
</evidence>
<evidence type="ECO:0000305" key="4"/>
<evidence type="ECO:0000305" key="5">
    <source>
    </source>
</evidence>
<evidence type="ECO:0000312" key="6">
    <source>
        <dbReference type="EMBL" id="CCH32724.1"/>
    </source>
</evidence>
<evidence type="ECO:0000312" key="7">
    <source>
        <dbReference type="Proteomes" id="UP000006281"/>
    </source>
</evidence>
<sequence>MGRPATPQQTAFHIPFPRAISPDVSAVHPGSMAWLRRHGMLRSDASARRVDGWRLTELAGRFFPDARGEDLRLGADVMGFFFLFDDQFDHPGGLRAEAVAVSKRLLHLTSLPAGPAPEGAGPVVAAWADLWNRSCQGMSSAWRVRAAREWRRYFVGNLEESVAREGMSGESVEDYLRLRAMTIGTTPVYDLCERTQHFEIPDEVLHSHHVQAMRDLATEIVVLCNDVASTIKESARGETLNAVLLLERHHEAERGPAVARVQRMVEARLAAFRRLRDRTSRTCAALDLTAEQCDRVDRYVRTALMSVVRGNYDWQQRSARFSADDARPGSLPGYLDDLVGHSGVVGPPPVDGS</sequence>
<dbReference type="EC" id="4.2.3.57" evidence="2"/>
<dbReference type="EMBL" id="HE804045">
    <property type="protein sequence ID" value="CCH32724.1"/>
    <property type="molecule type" value="Genomic_DNA"/>
</dbReference>
<dbReference type="RefSeq" id="WP_015102836.1">
    <property type="nucleotide sequence ID" value="NC_019673.1"/>
</dbReference>
<dbReference type="SMR" id="K0K750"/>
<dbReference type="STRING" id="1179773.BN6_54650"/>
<dbReference type="KEGG" id="sesp:BN6_54650"/>
<dbReference type="PATRIC" id="fig|1179773.3.peg.5508"/>
<dbReference type="eggNOG" id="COG0664">
    <property type="taxonomic scope" value="Bacteria"/>
</dbReference>
<dbReference type="HOGENOM" id="CLU_042538_4_0_11"/>
<dbReference type="OrthoDB" id="3676909at2"/>
<dbReference type="BioCyc" id="SESP1179773:BN6_RS26410-MONOMER"/>
<dbReference type="UniPathway" id="UPA00213"/>
<dbReference type="Proteomes" id="UP000006281">
    <property type="component" value="Chromosome"/>
</dbReference>
<dbReference type="GO" id="GO:0080016">
    <property type="term" value="F:(-)-E-beta-caryophyllene synthase activity"/>
    <property type="evidence" value="ECO:0007669"/>
    <property type="project" value="UniProtKB-EC"/>
</dbReference>
<dbReference type="GO" id="GO:0046872">
    <property type="term" value="F:metal ion binding"/>
    <property type="evidence" value="ECO:0007669"/>
    <property type="project" value="UniProtKB-KW"/>
</dbReference>
<dbReference type="GO" id="GO:0016114">
    <property type="term" value="P:terpenoid biosynthetic process"/>
    <property type="evidence" value="ECO:0007669"/>
    <property type="project" value="UniProtKB-UniPathway"/>
</dbReference>
<dbReference type="Gene3D" id="1.10.600.10">
    <property type="entry name" value="Farnesyl Diphosphate Synthase"/>
    <property type="match status" value="1"/>
</dbReference>
<dbReference type="InterPro" id="IPR008949">
    <property type="entry name" value="Isoprenoid_synthase_dom_sf"/>
</dbReference>
<dbReference type="InterPro" id="IPR034686">
    <property type="entry name" value="Terpene_cyclase-like_2"/>
</dbReference>
<dbReference type="PANTHER" id="PTHR35201:SF4">
    <property type="entry name" value="BETA-PINACENE SYNTHASE-RELATED"/>
    <property type="match status" value="1"/>
</dbReference>
<dbReference type="PANTHER" id="PTHR35201">
    <property type="entry name" value="TERPENE SYNTHASE"/>
    <property type="match status" value="1"/>
</dbReference>
<dbReference type="Pfam" id="PF19086">
    <property type="entry name" value="Terpene_syn_C_2"/>
    <property type="match status" value="1"/>
</dbReference>
<dbReference type="SFLD" id="SFLDS00005">
    <property type="entry name" value="Isoprenoid_Synthase_Type_I"/>
    <property type="match status" value="1"/>
</dbReference>
<dbReference type="SFLD" id="SFLDG01020">
    <property type="entry name" value="Terpene_Cyclase_Like_2"/>
    <property type="match status" value="1"/>
</dbReference>
<dbReference type="SUPFAM" id="SSF48576">
    <property type="entry name" value="Terpenoid synthases"/>
    <property type="match status" value="1"/>
</dbReference>
<protein>
    <recommendedName>
        <fullName evidence="3">(-)-beta-caryophyllene synthase ((2E,6E)-farnesyl diphosphate cyclizing)</fullName>
        <ecNumber evidence="2">4.2.3.57</ecNumber>
    </recommendedName>
    <alternativeName>
        <fullName evidence="3">Beta-caryophyllene synthase</fullName>
    </alternativeName>
    <alternativeName>
        <fullName evidence="3">Terpene synthase</fullName>
    </alternativeName>
    <alternativeName>
        <fullName evidence="3">Type I terpene cyclase</fullName>
    </alternativeName>
</protein>
<accession>K0K750</accession>
<proteinExistence type="evidence at protein level"/>
<gene>
    <name type="primary">ptlA</name>
    <name evidence="6" type="ordered locus">BN6_54650</name>
</gene>
<feature type="chain" id="PRO_0000443246" description="(-)-beta-caryophyllene synthase ((2E,6E)-farnesyl diphosphate cyclizing)">
    <location>
        <begin position="1"/>
        <end position="353"/>
    </location>
</feature>
<feature type="short sequence motif" description="DDXXD motif" evidence="5">
    <location>
        <begin position="85"/>
        <end position="89"/>
    </location>
</feature>
<feature type="binding site" evidence="1">
    <location>
        <position position="85"/>
    </location>
    <ligand>
        <name>Mg(2+)</name>
        <dbReference type="ChEBI" id="CHEBI:18420"/>
        <label>1</label>
    </ligand>
</feature>
<feature type="binding site" evidence="1">
    <location>
        <position position="89"/>
    </location>
    <ligand>
        <name>Mg(2+)</name>
        <dbReference type="ChEBI" id="CHEBI:18420"/>
        <label>1</label>
    </ligand>
</feature>
<feature type="binding site" evidence="1">
    <location>
        <position position="89"/>
    </location>
    <ligand>
        <name>Mg(2+)</name>
        <dbReference type="ChEBI" id="CHEBI:18420"/>
        <label>2</label>
    </ligand>
</feature>
<feature type="binding site" evidence="1">
    <location>
        <position position="179"/>
    </location>
    <ligand>
        <name>substrate</name>
    </ligand>
</feature>
<feature type="binding site" evidence="1">
    <location>
        <position position="225"/>
    </location>
    <ligand>
        <name>Mg(2+)</name>
        <dbReference type="ChEBI" id="CHEBI:18420"/>
        <label>3</label>
    </ligand>
</feature>
<feature type="binding site" evidence="1">
    <location>
        <position position="229"/>
    </location>
    <ligand>
        <name>Mg(2+)</name>
        <dbReference type="ChEBI" id="CHEBI:18420"/>
        <label>3</label>
    </ligand>
</feature>
<feature type="binding site" evidence="1">
    <location>
        <position position="232"/>
    </location>
    <ligand>
        <name>substrate</name>
    </ligand>
</feature>
<feature type="binding site" evidence="1">
    <location>
        <position position="233"/>
    </location>
    <ligand>
        <name>Mg(2+)</name>
        <dbReference type="ChEBI" id="CHEBI:18420"/>
        <label>3</label>
    </ligand>
</feature>
<feature type="binding site" evidence="1">
    <location>
        <begin position="320"/>
        <end position="321"/>
    </location>
    <ligand>
        <name>substrate</name>
    </ligand>
</feature>
<feature type="site" description="Plays a critical role in the stabilization of intermediate cation" evidence="1">
    <location>
        <position position="82"/>
    </location>
</feature>
<feature type="site" description="Plays a critical role for substrate recognition" evidence="1">
    <location>
        <position position="86"/>
    </location>
</feature>
<feature type="site" description="Plays a critical role for substrate recognition" evidence="1">
    <location>
        <position position="160"/>
    </location>
</feature>
<reference key="1">
    <citation type="journal article" date="2012" name="BMC Genomics">
        <title>Complete genome sequence of Saccharothrix espanaensis DSM 44229T and comparison to the other completely sequenced Pseudonocardiaceae.</title>
        <authorList>
            <person name="Strobel T."/>
            <person name="Al-Dilaimi A."/>
            <person name="Blom J."/>
            <person name="Gessner A."/>
            <person name="Kalinowski J."/>
            <person name="Luzhetska M."/>
            <person name="Puhler A."/>
            <person name="Szczepanowski R."/>
            <person name="Bechthold A."/>
            <person name="Ruckert C."/>
        </authorList>
    </citation>
    <scope>NUCLEOTIDE SEQUENCE [LARGE SCALE GENOMIC DNA]</scope>
    <source>
        <strain evidence="7">ATCC 51144 / DSM 44229 / JCM 9112 / NBRC 15066 / NRRL 15764</strain>
    </source>
</reference>
<reference key="2">
    <citation type="journal article" date="2016" name="Beilstein J. Org. Chem.">
        <title>Mechanistic investigations on six bacterial terpene cyclases.</title>
        <authorList>
            <person name="Rabe P."/>
            <person name="Schmitz T."/>
            <person name="Dickschat J.S."/>
        </authorList>
    </citation>
    <scope>FUNCTION</scope>
    <scope>CATALYTIC ACTIVITY</scope>
    <scope>DOMAIN</scope>
    <scope>PATHWAY</scope>
    <source>
        <strain>ATCC 51144 / DSM 44229 / JCM 9112 / NBRC 15066 / NRRL 15764</strain>
    </source>
</reference>
<organism>
    <name type="scientific">Saccharothrix espanaensis (strain ATCC 51144 / DSM 44229 / JCM 9112 / NBRC 15066 / NRRL 15764)</name>
    <dbReference type="NCBI Taxonomy" id="1179773"/>
    <lineage>
        <taxon>Bacteria</taxon>
        <taxon>Bacillati</taxon>
        <taxon>Actinomycetota</taxon>
        <taxon>Actinomycetes</taxon>
        <taxon>Pseudonocardiales</taxon>
        <taxon>Pseudonocardiaceae</taxon>
        <taxon>Saccharothrix</taxon>
    </lineage>
</organism>